<comment type="function">
    <text evidence="1">Part of the twin-arginine translocation (Tat) system that transports large folded proteins containing a characteristic twin-arginine motif in their signal peptide across membranes. TatA could form the protein-conducting channel of the Tat system.</text>
</comment>
<comment type="subunit">
    <text evidence="1">The Tat system comprises two distinct complexes: a TatABC complex, containing multiple copies of TatA, TatB and TatC subunits, and a separate TatA complex, containing only TatA subunits. Substrates initially bind to the TatABC complex, which probably triggers association of the separate TatA complex to form the active translocon.</text>
</comment>
<comment type="subcellular location">
    <subcellularLocation>
        <location evidence="1">Cell inner membrane</location>
        <topology evidence="1">Single-pass membrane protein</topology>
    </subcellularLocation>
</comment>
<comment type="similarity">
    <text evidence="1">Belongs to the TatA/E family.</text>
</comment>
<organism>
    <name type="scientific">Helicobacter pylori (strain J99 / ATCC 700824)</name>
    <name type="common">Campylobacter pylori J99</name>
    <dbReference type="NCBI Taxonomy" id="85963"/>
    <lineage>
        <taxon>Bacteria</taxon>
        <taxon>Pseudomonadati</taxon>
        <taxon>Campylobacterota</taxon>
        <taxon>Epsilonproteobacteria</taxon>
        <taxon>Campylobacterales</taxon>
        <taxon>Helicobacteraceae</taxon>
        <taxon>Helicobacter</taxon>
    </lineage>
</organism>
<name>TATA_HELPJ</name>
<accession>Q9ZMB8</accession>
<sequence length="79" mass="8752">MGGFTSIWHWVIVLLVIVLLFGAKKIPELAKGLGSGIKNFKKAVKDDEEEAKNELKTLDAQATQTKVHETSEIKSKQES</sequence>
<feature type="chain" id="PRO_0000097940" description="Sec-independent protein translocase protein TatA">
    <location>
        <begin position="1"/>
        <end position="79"/>
    </location>
</feature>
<feature type="transmembrane region" description="Helical" evidence="1">
    <location>
        <begin position="1"/>
        <end position="21"/>
    </location>
</feature>
<feature type="region of interest" description="Disordered" evidence="2">
    <location>
        <begin position="54"/>
        <end position="79"/>
    </location>
</feature>
<feature type="compositionally biased region" description="Basic and acidic residues" evidence="2">
    <location>
        <begin position="66"/>
        <end position="79"/>
    </location>
</feature>
<dbReference type="EMBL" id="AE001439">
    <property type="protein sequence ID" value="AAD05888.1"/>
    <property type="molecule type" value="Genomic_DNA"/>
</dbReference>
<dbReference type="PIR" id="A71948">
    <property type="entry name" value="A71948"/>
</dbReference>
<dbReference type="RefSeq" id="WP_000508571.1">
    <property type="nucleotide sequence ID" value="NC_000921.1"/>
</dbReference>
<dbReference type="SMR" id="Q9ZMB8"/>
<dbReference type="KEGG" id="hpj:jhp_0303"/>
<dbReference type="PATRIC" id="fig|85963.30.peg.710"/>
<dbReference type="eggNOG" id="COG1826">
    <property type="taxonomic scope" value="Bacteria"/>
</dbReference>
<dbReference type="Proteomes" id="UP000000804">
    <property type="component" value="Chromosome"/>
</dbReference>
<dbReference type="GO" id="GO:0033281">
    <property type="term" value="C:TAT protein transport complex"/>
    <property type="evidence" value="ECO:0007669"/>
    <property type="project" value="UniProtKB-UniRule"/>
</dbReference>
<dbReference type="GO" id="GO:0008320">
    <property type="term" value="F:protein transmembrane transporter activity"/>
    <property type="evidence" value="ECO:0007669"/>
    <property type="project" value="UniProtKB-UniRule"/>
</dbReference>
<dbReference type="GO" id="GO:0043953">
    <property type="term" value="P:protein transport by the Tat complex"/>
    <property type="evidence" value="ECO:0007669"/>
    <property type="project" value="UniProtKB-UniRule"/>
</dbReference>
<dbReference type="Gene3D" id="1.20.5.3310">
    <property type="match status" value="1"/>
</dbReference>
<dbReference type="HAMAP" id="MF_00236">
    <property type="entry name" value="TatA_E"/>
    <property type="match status" value="1"/>
</dbReference>
<dbReference type="InterPro" id="IPR003369">
    <property type="entry name" value="TatA/B/E"/>
</dbReference>
<dbReference type="InterPro" id="IPR006312">
    <property type="entry name" value="TatA/E"/>
</dbReference>
<dbReference type="NCBIfam" id="TIGR01411">
    <property type="entry name" value="tatAE"/>
    <property type="match status" value="1"/>
</dbReference>
<dbReference type="PANTHER" id="PTHR42982">
    <property type="entry name" value="SEC-INDEPENDENT PROTEIN TRANSLOCASE PROTEIN TATA"/>
    <property type="match status" value="1"/>
</dbReference>
<dbReference type="PANTHER" id="PTHR42982:SF1">
    <property type="entry name" value="SEC-INDEPENDENT PROTEIN TRANSLOCASE PROTEIN TATA"/>
    <property type="match status" value="1"/>
</dbReference>
<dbReference type="Pfam" id="PF02416">
    <property type="entry name" value="TatA_B_E"/>
    <property type="match status" value="1"/>
</dbReference>
<proteinExistence type="inferred from homology"/>
<reference key="1">
    <citation type="journal article" date="1999" name="Nature">
        <title>Genomic sequence comparison of two unrelated isolates of the human gastric pathogen Helicobacter pylori.</title>
        <authorList>
            <person name="Alm R.A."/>
            <person name="Ling L.-S.L."/>
            <person name="Moir D.T."/>
            <person name="King B.L."/>
            <person name="Brown E.D."/>
            <person name="Doig P.C."/>
            <person name="Smith D.R."/>
            <person name="Noonan B."/>
            <person name="Guild B.C."/>
            <person name="deJonge B.L."/>
            <person name="Carmel G."/>
            <person name="Tummino P.J."/>
            <person name="Caruso A."/>
            <person name="Uria-Nickelsen M."/>
            <person name="Mills D.M."/>
            <person name="Ives C."/>
            <person name="Gibson R."/>
            <person name="Merberg D."/>
            <person name="Mills S.D."/>
            <person name="Jiang Q."/>
            <person name="Taylor D.E."/>
            <person name="Vovis G.F."/>
            <person name="Trust T.J."/>
        </authorList>
    </citation>
    <scope>NUCLEOTIDE SEQUENCE [LARGE SCALE GENOMIC DNA]</scope>
    <source>
        <strain>J99 / ATCC 700824</strain>
    </source>
</reference>
<evidence type="ECO:0000255" key="1">
    <source>
        <dbReference type="HAMAP-Rule" id="MF_00236"/>
    </source>
</evidence>
<evidence type="ECO:0000256" key="2">
    <source>
        <dbReference type="SAM" id="MobiDB-lite"/>
    </source>
</evidence>
<protein>
    <recommendedName>
        <fullName evidence="1">Sec-independent protein translocase protein TatA</fullName>
    </recommendedName>
</protein>
<gene>
    <name evidence="1" type="primary">tatA</name>
    <name type="ordered locus">jhp_0303</name>
</gene>
<keyword id="KW-0997">Cell inner membrane</keyword>
<keyword id="KW-1003">Cell membrane</keyword>
<keyword id="KW-0472">Membrane</keyword>
<keyword id="KW-0653">Protein transport</keyword>
<keyword id="KW-0811">Translocation</keyword>
<keyword id="KW-0812">Transmembrane</keyword>
<keyword id="KW-1133">Transmembrane helix</keyword>
<keyword id="KW-0813">Transport</keyword>